<evidence type="ECO:0000255" key="1"/>
<evidence type="ECO:0000255" key="2">
    <source>
        <dbReference type="PROSITE-ProRule" id="PRU00282"/>
    </source>
</evidence>
<evidence type="ECO:0000269" key="3">
    <source>
    </source>
</evidence>
<evidence type="ECO:0000303" key="4">
    <source>
    </source>
</evidence>
<evidence type="ECO:0000305" key="5"/>
<evidence type="ECO:0000312" key="6">
    <source>
        <dbReference type="Araport" id="AT1G14560"/>
    </source>
</evidence>
<evidence type="ECO:0000312" key="7">
    <source>
        <dbReference type="EMBL" id="AAF63166.1"/>
    </source>
</evidence>
<protein>
    <recommendedName>
        <fullName evidence="5">Mitochondrial carrier protein CoAc1</fullName>
    </recommendedName>
    <alternativeName>
        <fullName evidence="4">AtCoAc1</fullName>
    </alternativeName>
    <alternativeName>
        <fullName evidence="5">Mitochondrial coenzyme A transporter CoAc1</fullName>
    </alternativeName>
</protein>
<dbReference type="EMBL" id="AC010657">
    <property type="protein sequence ID" value="AAF63166.1"/>
    <property type="status" value="ALT_SEQ"/>
    <property type="molecule type" value="Genomic_DNA"/>
</dbReference>
<dbReference type="EMBL" id="CP002684">
    <property type="protein sequence ID" value="AEE29181.1"/>
    <property type="molecule type" value="Genomic_DNA"/>
</dbReference>
<dbReference type="EMBL" id="AY093061">
    <property type="protein sequence ID" value="AAM13060.1"/>
    <property type="molecule type" value="mRNA"/>
</dbReference>
<dbReference type="EMBL" id="AY128770">
    <property type="protein sequence ID" value="AAM91170.1"/>
    <property type="molecule type" value="mRNA"/>
</dbReference>
<dbReference type="EMBL" id="BX814249">
    <property type="status" value="NOT_ANNOTATED_CDS"/>
    <property type="molecule type" value="mRNA"/>
</dbReference>
<dbReference type="RefSeq" id="NP_172908.1">
    <molecule id="F4HW79-1"/>
    <property type="nucleotide sequence ID" value="NM_101323.3"/>
</dbReference>
<dbReference type="SMR" id="F4HW79"/>
<dbReference type="FunCoup" id="F4HW79">
    <property type="interactions" value="2665"/>
</dbReference>
<dbReference type="STRING" id="3702.F4HW79"/>
<dbReference type="TCDB" id="2.A.29.12.5">
    <property type="family name" value="the mitochondrial carrier (mc) family"/>
</dbReference>
<dbReference type="iPTMnet" id="F4HW79"/>
<dbReference type="PaxDb" id="3702-AT1G14560.1"/>
<dbReference type="EnsemblPlants" id="AT1G14560.1">
    <molecule id="F4HW79-1"/>
    <property type="protein sequence ID" value="AT1G14560.1"/>
    <property type="gene ID" value="AT1G14560"/>
</dbReference>
<dbReference type="GeneID" id="838018"/>
<dbReference type="Gramene" id="AT1G14560.1">
    <molecule id="F4HW79-1"/>
    <property type="protein sequence ID" value="AT1G14560.1"/>
    <property type="gene ID" value="AT1G14560"/>
</dbReference>
<dbReference type="KEGG" id="ath:AT1G14560"/>
<dbReference type="Araport" id="AT1G14560"/>
<dbReference type="TAIR" id="AT1G14560">
    <property type="gene designation" value="COAC1"/>
</dbReference>
<dbReference type="eggNOG" id="KOG0752">
    <property type="taxonomic scope" value="Eukaryota"/>
</dbReference>
<dbReference type="HOGENOM" id="CLU_015166_10_1_1"/>
<dbReference type="InParanoid" id="F4HW79"/>
<dbReference type="OMA" id="MLGMWET"/>
<dbReference type="OrthoDB" id="270584at2759"/>
<dbReference type="PRO" id="PR:F4HW79"/>
<dbReference type="Proteomes" id="UP000006548">
    <property type="component" value="Chromosome 1"/>
</dbReference>
<dbReference type="ExpressionAtlas" id="F4HW79">
    <property type="expression patterns" value="baseline and differential"/>
</dbReference>
<dbReference type="GO" id="GO:0005743">
    <property type="term" value="C:mitochondrial inner membrane"/>
    <property type="evidence" value="ECO:0000314"/>
    <property type="project" value="UniProtKB"/>
</dbReference>
<dbReference type="GO" id="GO:0005739">
    <property type="term" value="C:mitochondrion"/>
    <property type="evidence" value="ECO:0000314"/>
    <property type="project" value="TAIR"/>
</dbReference>
<dbReference type="GO" id="GO:0015228">
    <property type="term" value="F:coenzyme A transmembrane transporter activity"/>
    <property type="evidence" value="ECO:0000316"/>
    <property type="project" value="TAIR"/>
</dbReference>
<dbReference type="GO" id="GO:1990559">
    <property type="term" value="P:mitochondrial coenzyme A transmembrane transport"/>
    <property type="evidence" value="ECO:0000316"/>
    <property type="project" value="UniProtKB"/>
</dbReference>
<dbReference type="FunFam" id="1.50.40.10:FF:000014">
    <property type="entry name" value="mitochondrial coenzyme A transporter SLC25A42"/>
    <property type="match status" value="1"/>
</dbReference>
<dbReference type="Gene3D" id="1.50.40.10">
    <property type="entry name" value="Mitochondrial carrier domain"/>
    <property type="match status" value="1"/>
</dbReference>
<dbReference type="InterPro" id="IPR002167">
    <property type="entry name" value="GDC-like"/>
</dbReference>
<dbReference type="InterPro" id="IPR002067">
    <property type="entry name" value="Mit_carrier"/>
</dbReference>
<dbReference type="InterPro" id="IPR018108">
    <property type="entry name" value="Mitochondrial_sb/sol_carrier"/>
</dbReference>
<dbReference type="InterPro" id="IPR023395">
    <property type="entry name" value="Mt_carrier_dom_sf"/>
</dbReference>
<dbReference type="PANTHER" id="PTHR24089">
    <property type="entry name" value="SOLUTE CARRIER FAMILY 25"/>
    <property type="match status" value="1"/>
</dbReference>
<dbReference type="Pfam" id="PF00153">
    <property type="entry name" value="Mito_carr"/>
    <property type="match status" value="3"/>
</dbReference>
<dbReference type="PRINTS" id="PR00928">
    <property type="entry name" value="GRAVESDC"/>
</dbReference>
<dbReference type="PRINTS" id="PR00926">
    <property type="entry name" value="MITOCARRIER"/>
</dbReference>
<dbReference type="SUPFAM" id="SSF103506">
    <property type="entry name" value="Mitochondrial carrier"/>
    <property type="match status" value="1"/>
</dbReference>
<dbReference type="PROSITE" id="PS50920">
    <property type="entry name" value="SOLCAR"/>
    <property type="match status" value="3"/>
</dbReference>
<sequence length="331" mass="36255">MGSSQGSTLSADVMSLVDTLPVLAKTLIAGGAAGAIAKTAVAPLERIKILLQTRTNDFKTLGVSQSLKKVLQFDGPLGFYKGNGASVIRIIPYAALHYMTYEVYRDWILEKNLPLGSGPIVDLVAGSAAGGTAVLCTYPLDLARTKLAYQVSDTRQSLRGGANGFYRQPTYSGIKEVLAMAYKEGGPRGLYRGIGPTLIGILPYAGLKFYIYEELKRHVPEEHQNSVRMHLPCGALAGLFGQTITYPLDVVRRQMQVENLQPMTSEGNNKRYKNTFDGLNTIVRTQGWKQLFAGLSINYIKIVPSVAIGFTVYESMKSWMRIPPRERSKPA</sequence>
<gene>
    <name evidence="4" type="primary">COAC1</name>
    <name evidence="6" type="ordered locus">At1g14560</name>
    <name evidence="7" type="ORF">T5E21.6</name>
</gene>
<reference key="1">
    <citation type="journal article" date="2000" name="Nature">
        <title>Sequence and analysis of chromosome 1 of the plant Arabidopsis thaliana.</title>
        <authorList>
            <person name="Theologis A."/>
            <person name="Ecker J.R."/>
            <person name="Palm C.J."/>
            <person name="Federspiel N.A."/>
            <person name="Kaul S."/>
            <person name="White O."/>
            <person name="Alonso J."/>
            <person name="Altafi H."/>
            <person name="Araujo R."/>
            <person name="Bowman C.L."/>
            <person name="Brooks S.Y."/>
            <person name="Buehler E."/>
            <person name="Chan A."/>
            <person name="Chao Q."/>
            <person name="Chen H."/>
            <person name="Cheuk R.F."/>
            <person name="Chin C.W."/>
            <person name="Chung M.K."/>
            <person name="Conn L."/>
            <person name="Conway A.B."/>
            <person name="Conway A.R."/>
            <person name="Creasy T.H."/>
            <person name="Dewar K."/>
            <person name="Dunn P."/>
            <person name="Etgu P."/>
            <person name="Feldblyum T.V."/>
            <person name="Feng J.-D."/>
            <person name="Fong B."/>
            <person name="Fujii C.Y."/>
            <person name="Gill J.E."/>
            <person name="Goldsmith A.D."/>
            <person name="Haas B."/>
            <person name="Hansen N.F."/>
            <person name="Hughes B."/>
            <person name="Huizar L."/>
            <person name="Hunter J.L."/>
            <person name="Jenkins J."/>
            <person name="Johnson-Hopson C."/>
            <person name="Khan S."/>
            <person name="Khaykin E."/>
            <person name="Kim C.J."/>
            <person name="Koo H.L."/>
            <person name="Kremenetskaia I."/>
            <person name="Kurtz D.B."/>
            <person name="Kwan A."/>
            <person name="Lam B."/>
            <person name="Langin-Hooper S."/>
            <person name="Lee A."/>
            <person name="Lee J.M."/>
            <person name="Lenz C.A."/>
            <person name="Li J.H."/>
            <person name="Li Y.-P."/>
            <person name="Lin X."/>
            <person name="Liu S.X."/>
            <person name="Liu Z.A."/>
            <person name="Luros J.S."/>
            <person name="Maiti R."/>
            <person name="Marziali A."/>
            <person name="Militscher J."/>
            <person name="Miranda M."/>
            <person name="Nguyen M."/>
            <person name="Nierman W.C."/>
            <person name="Osborne B.I."/>
            <person name="Pai G."/>
            <person name="Peterson J."/>
            <person name="Pham P.K."/>
            <person name="Rizzo M."/>
            <person name="Rooney T."/>
            <person name="Rowley D."/>
            <person name="Sakano H."/>
            <person name="Salzberg S.L."/>
            <person name="Schwartz J.R."/>
            <person name="Shinn P."/>
            <person name="Southwick A.M."/>
            <person name="Sun H."/>
            <person name="Tallon L.J."/>
            <person name="Tambunga G."/>
            <person name="Toriumi M.J."/>
            <person name="Town C.D."/>
            <person name="Utterback T."/>
            <person name="Van Aken S."/>
            <person name="Vaysberg M."/>
            <person name="Vysotskaia V.S."/>
            <person name="Walker M."/>
            <person name="Wu D."/>
            <person name="Yu G."/>
            <person name="Fraser C.M."/>
            <person name="Venter J.C."/>
            <person name="Davis R.W."/>
        </authorList>
    </citation>
    <scope>NUCLEOTIDE SEQUENCE [LARGE SCALE GENOMIC DNA]</scope>
    <source>
        <strain>cv. Columbia</strain>
    </source>
</reference>
<reference key="2">
    <citation type="journal article" date="2017" name="Plant J.">
        <title>Araport11: a complete reannotation of the Arabidopsis thaliana reference genome.</title>
        <authorList>
            <person name="Cheng C.Y."/>
            <person name="Krishnakumar V."/>
            <person name="Chan A.P."/>
            <person name="Thibaud-Nissen F."/>
            <person name="Schobel S."/>
            <person name="Town C.D."/>
        </authorList>
    </citation>
    <scope>GENOME REANNOTATION</scope>
    <source>
        <strain>cv. Columbia</strain>
    </source>
</reference>
<reference key="3">
    <citation type="journal article" date="2003" name="Science">
        <title>Empirical analysis of transcriptional activity in the Arabidopsis genome.</title>
        <authorList>
            <person name="Yamada K."/>
            <person name="Lim J."/>
            <person name="Dale J.M."/>
            <person name="Chen H."/>
            <person name="Shinn P."/>
            <person name="Palm C.J."/>
            <person name="Southwick A.M."/>
            <person name="Wu H.C."/>
            <person name="Kim C.J."/>
            <person name="Nguyen M."/>
            <person name="Pham P.K."/>
            <person name="Cheuk R.F."/>
            <person name="Karlin-Newmann G."/>
            <person name="Liu S.X."/>
            <person name="Lam B."/>
            <person name="Sakano H."/>
            <person name="Wu T."/>
            <person name="Yu G."/>
            <person name="Miranda M."/>
            <person name="Quach H.L."/>
            <person name="Tripp M."/>
            <person name="Chang C.H."/>
            <person name="Lee J.M."/>
            <person name="Toriumi M.J."/>
            <person name="Chan M.M."/>
            <person name="Tang C.C."/>
            <person name="Onodera C.S."/>
            <person name="Deng J.M."/>
            <person name="Akiyama K."/>
            <person name="Ansari Y."/>
            <person name="Arakawa T."/>
            <person name="Banh J."/>
            <person name="Banno F."/>
            <person name="Bowser L."/>
            <person name="Brooks S.Y."/>
            <person name="Carninci P."/>
            <person name="Chao Q."/>
            <person name="Choy N."/>
            <person name="Enju A."/>
            <person name="Goldsmith A.D."/>
            <person name="Gurjal M."/>
            <person name="Hansen N.F."/>
            <person name="Hayashizaki Y."/>
            <person name="Johnson-Hopson C."/>
            <person name="Hsuan V.W."/>
            <person name="Iida K."/>
            <person name="Karnes M."/>
            <person name="Khan S."/>
            <person name="Koesema E."/>
            <person name="Ishida J."/>
            <person name="Jiang P.X."/>
            <person name="Jones T."/>
            <person name="Kawai J."/>
            <person name="Kamiya A."/>
            <person name="Meyers C."/>
            <person name="Nakajima M."/>
            <person name="Narusaka M."/>
            <person name="Seki M."/>
            <person name="Sakurai T."/>
            <person name="Satou M."/>
            <person name="Tamse R."/>
            <person name="Vaysberg M."/>
            <person name="Wallender E.K."/>
            <person name="Wong C."/>
            <person name="Yamamura Y."/>
            <person name="Yuan S."/>
            <person name="Shinozaki K."/>
            <person name="Davis R.W."/>
            <person name="Theologis A."/>
            <person name="Ecker J.R."/>
        </authorList>
    </citation>
    <scope>NUCLEOTIDE SEQUENCE [LARGE SCALE MRNA] (ISOFORM 2)</scope>
    <source>
        <strain>cv. Columbia</strain>
    </source>
</reference>
<reference key="4">
    <citation type="journal article" date="2004" name="Genome Res.">
        <title>Whole genome sequence comparisons and 'full-length' cDNA sequences: a combined approach to evaluate and improve Arabidopsis genome annotation.</title>
        <authorList>
            <person name="Castelli V."/>
            <person name="Aury J.-M."/>
            <person name="Jaillon O."/>
            <person name="Wincker P."/>
            <person name="Clepet C."/>
            <person name="Menard M."/>
            <person name="Cruaud C."/>
            <person name="Quetier F."/>
            <person name="Scarpelli C."/>
            <person name="Schaechter V."/>
            <person name="Temple G."/>
            <person name="Caboche M."/>
            <person name="Weissenbach J."/>
            <person name="Salanoubat M."/>
        </authorList>
    </citation>
    <scope>NUCLEOTIDE SEQUENCE [LARGE SCALE MRNA] (ISOFORM 1)</scope>
    <source>
        <strain>cv. Columbia</strain>
    </source>
</reference>
<reference key="5">
    <citation type="journal article" date="2004" name="Trends Plant Sci.">
        <title>The growing family of mitochondrial carriers in Arabidopsis.</title>
        <authorList>
            <person name="Picault N."/>
            <person name="Hodges M."/>
            <person name="Palmieri L."/>
            <person name="Palmieri F."/>
        </authorList>
    </citation>
    <scope>GENE FAMILY</scope>
</reference>
<reference key="6">
    <citation type="journal article" date="2013" name="Plant Physiol.">
        <title>Identification of mitochondrial coenzyme a transporters from maize and Arabidopsis.</title>
        <authorList>
            <person name="Zallot R."/>
            <person name="Agrimi G."/>
            <person name="Lerma-Ortiz C."/>
            <person name="Teresinski H.J."/>
            <person name="Frelin O."/>
            <person name="Ellens K.W."/>
            <person name="Castegna A."/>
            <person name="Russo A."/>
            <person name="de Crecy-Lagard V."/>
            <person name="Mullen R.T."/>
            <person name="Palmieri F."/>
            <person name="Hanson A.D."/>
        </authorList>
    </citation>
    <scope>FUNCTION</scope>
    <scope>SUBCELLULAR LOCATION</scope>
    <scope>TISSUE SPECIFICITY</scope>
</reference>
<comment type="function">
    <text evidence="3">Required for the accumulation of coenzyme A in the mitochondrial matrix.</text>
</comment>
<comment type="subcellular location">
    <subcellularLocation>
        <location evidence="3">Mitochondrion inner membrane</location>
        <topology evidence="1">Multi-pass membrane protein</topology>
    </subcellularLocation>
</comment>
<comment type="alternative products">
    <event type="alternative splicing"/>
    <isoform>
        <id>F4HW79-1</id>
        <name>1</name>
        <sequence type="displayed"/>
    </isoform>
    <isoform>
        <id>F4HW79-2</id>
        <name>2</name>
        <sequence type="described" ref="VSP_059019"/>
    </isoform>
</comment>
<comment type="tissue specificity">
    <text evidence="3">Expressed throughout the plant.</text>
</comment>
<comment type="similarity">
    <text evidence="5">Belongs to the mitochondrial carrier (TC 2.A.29) family.</text>
</comment>
<comment type="sequence caution" evidence="5">
    <conflict type="erroneous gene model prediction">
        <sequence resource="EMBL-CDS" id="AAF63166"/>
    </conflict>
</comment>
<comment type="sequence caution" evidence="5">
    <conflict type="erroneous termination">
        <sequence resource="EMBL" id="BX814249"/>
    </conflict>
    <text>Extended C-terminus.</text>
</comment>
<keyword id="KW-0025">Alternative splicing</keyword>
<keyword id="KW-0472">Membrane</keyword>
<keyword id="KW-0496">Mitochondrion</keyword>
<keyword id="KW-0999">Mitochondrion inner membrane</keyword>
<keyword id="KW-1185">Reference proteome</keyword>
<keyword id="KW-0677">Repeat</keyword>
<keyword id="KW-0812">Transmembrane</keyword>
<keyword id="KW-1133">Transmembrane helix</keyword>
<keyword id="KW-0813">Transport</keyword>
<accession>F4HW79</accession>
<accession>Q8RWI6</accession>
<accession>Q9MA27</accession>
<proteinExistence type="evidence at transcript level"/>
<organism>
    <name type="scientific">Arabidopsis thaliana</name>
    <name type="common">Mouse-ear cress</name>
    <dbReference type="NCBI Taxonomy" id="3702"/>
    <lineage>
        <taxon>Eukaryota</taxon>
        <taxon>Viridiplantae</taxon>
        <taxon>Streptophyta</taxon>
        <taxon>Embryophyta</taxon>
        <taxon>Tracheophyta</taxon>
        <taxon>Spermatophyta</taxon>
        <taxon>Magnoliopsida</taxon>
        <taxon>eudicotyledons</taxon>
        <taxon>Gunneridae</taxon>
        <taxon>Pentapetalae</taxon>
        <taxon>rosids</taxon>
        <taxon>malvids</taxon>
        <taxon>Brassicales</taxon>
        <taxon>Brassicaceae</taxon>
        <taxon>Camelineae</taxon>
        <taxon>Arabidopsis</taxon>
    </lineage>
</organism>
<name>COAC1_ARATH</name>
<feature type="chain" id="PRO_0000440985" description="Mitochondrial carrier protein CoAc1">
    <location>
        <begin position="1"/>
        <end position="331"/>
    </location>
</feature>
<feature type="transmembrane region" description="Helical; Name=1" evidence="1">
    <location>
        <begin position="16"/>
        <end position="36"/>
    </location>
</feature>
<feature type="transmembrane region" description="Helical; Name=2" evidence="5">
    <location>
        <begin position="79"/>
        <end position="99"/>
    </location>
</feature>
<feature type="transmembrane region" description="Helical; Name=3" evidence="1">
    <location>
        <begin position="123"/>
        <end position="143"/>
    </location>
</feature>
<feature type="transmembrane region" description="Helical; Name=4" evidence="1">
    <location>
        <begin position="193"/>
        <end position="213"/>
    </location>
</feature>
<feature type="transmembrane region" description="Helical; Name=5" evidence="1">
    <location>
        <begin position="231"/>
        <end position="251"/>
    </location>
</feature>
<feature type="transmembrane region" description="Helical; Name=6" evidence="1">
    <location>
        <begin position="292"/>
        <end position="312"/>
    </location>
</feature>
<feature type="repeat" description="Solcar 1" evidence="2">
    <location>
        <begin position="21"/>
        <end position="107"/>
    </location>
</feature>
<feature type="repeat" description="Solcar 2" evidence="2">
    <location>
        <begin position="117"/>
        <end position="218"/>
    </location>
</feature>
<feature type="repeat" description="Solcar 3" evidence="2">
    <location>
        <begin position="225"/>
        <end position="319"/>
    </location>
</feature>
<feature type="splice variant" id="VSP_059019" description="In isoform 2.">
    <location>
        <begin position="1"/>
        <end position="179"/>
    </location>
</feature>
<feature type="sequence conflict" description="In Ref. 4; BX814249." evidence="5" ref="4">
    <original>D</original>
    <variation>H</variation>
    <location>
        <position position="106"/>
    </location>
</feature>
<feature type="sequence conflict" description="In Ref. 4; BX814249." evidence="5" ref="4">
    <original>D</original>
    <variation>N</variation>
    <location>
        <position position="153"/>
    </location>
</feature>
<feature type="sequence conflict" description="In Ref. 4; BX814249." evidence="5" ref="4">
    <original>N</original>
    <variation>Y</variation>
    <location>
        <position position="269"/>
    </location>
</feature>
<feature type="sequence conflict" description="In Ref. 4; BX814249." evidence="5" ref="4">
    <original>F</original>
    <variation>L</variation>
    <location>
        <position position="310"/>
    </location>
</feature>